<reference key="1">
    <citation type="journal article" date="2007" name="J. Bacteriol.">
        <title>The complete genome sequence of the lactic acid bacterial paradigm Lactococcus lactis subsp. cremoris MG1363.</title>
        <authorList>
            <person name="Wegmann U."/>
            <person name="O'Connell-Motherway M."/>
            <person name="Zomer A."/>
            <person name="Buist G."/>
            <person name="Shearman C."/>
            <person name="Canchaya C."/>
            <person name="Ventura M."/>
            <person name="Goesmann A."/>
            <person name="Gasson M.J."/>
            <person name="Kuipers O.P."/>
            <person name="van Sinderen D."/>
            <person name="Kok J."/>
        </authorList>
    </citation>
    <scope>NUCLEOTIDE SEQUENCE [LARGE SCALE GENOMIC DNA]</scope>
    <source>
        <strain>MG1363</strain>
    </source>
</reference>
<feature type="chain" id="PRO_1000021419" description="Ribonuclease P protein component">
    <location>
        <begin position="1"/>
        <end position="117"/>
    </location>
</feature>
<organism>
    <name type="scientific">Lactococcus lactis subsp. cremoris (strain MG1363)</name>
    <dbReference type="NCBI Taxonomy" id="416870"/>
    <lineage>
        <taxon>Bacteria</taxon>
        <taxon>Bacillati</taxon>
        <taxon>Bacillota</taxon>
        <taxon>Bacilli</taxon>
        <taxon>Lactobacillales</taxon>
        <taxon>Streptococcaceae</taxon>
        <taxon>Lactococcus</taxon>
        <taxon>Lactococcus cremoris subsp. cremoris</taxon>
    </lineage>
</organism>
<protein>
    <recommendedName>
        <fullName evidence="1">Ribonuclease P protein component</fullName>
        <shortName evidence="1">RNase P protein</shortName>
        <shortName evidence="1">RNaseP protein</shortName>
        <ecNumber evidence="1">3.1.26.5</ecNumber>
    </recommendedName>
    <alternativeName>
        <fullName evidence="1">Protein C5</fullName>
    </alternativeName>
</protein>
<evidence type="ECO:0000255" key="1">
    <source>
        <dbReference type="HAMAP-Rule" id="MF_00227"/>
    </source>
</evidence>
<dbReference type="EC" id="3.1.26.5" evidence="1"/>
<dbReference type="EMBL" id="AM406671">
    <property type="protein sequence ID" value="CAL96749.1"/>
    <property type="molecule type" value="Genomic_DNA"/>
</dbReference>
<dbReference type="RefSeq" id="WP_011675185.1">
    <property type="nucleotide sequence ID" value="NC_009004.1"/>
</dbReference>
<dbReference type="SMR" id="A2RHL3"/>
<dbReference type="STRING" id="416870.llmg_0142"/>
<dbReference type="GeneID" id="61108442"/>
<dbReference type="KEGG" id="llm:llmg_0142"/>
<dbReference type="eggNOG" id="COG0594">
    <property type="taxonomic scope" value="Bacteria"/>
</dbReference>
<dbReference type="HOGENOM" id="CLU_117179_9_1_9"/>
<dbReference type="OrthoDB" id="9810867at2"/>
<dbReference type="PhylomeDB" id="A2RHL3"/>
<dbReference type="Proteomes" id="UP000000364">
    <property type="component" value="Chromosome"/>
</dbReference>
<dbReference type="GO" id="GO:0030677">
    <property type="term" value="C:ribonuclease P complex"/>
    <property type="evidence" value="ECO:0007669"/>
    <property type="project" value="TreeGrafter"/>
</dbReference>
<dbReference type="GO" id="GO:0042781">
    <property type="term" value="F:3'-tRNA processing endoribonuclease activity"/>
    <property type="evidence" value="ECO:0007669"/>
    <property type="project" value="TreeGrafter"/>
</dbReference>
<dbReference type="GO" id="GO:0004526">
    <property type="term" value="F:ribonuclease P activity"/>
    <property type="evidence" value="ECO:0007669"/>
    <property type="project" value="UniProtKB-UniRule"/>
</dbReference>
<dbReference type="GO" id="GO:0000049">
    <property type="term" value="F:tRNA binding"/>
    <property type="evidence" value="ECO:0007669"/>
    <property type="project" value="UniProtKB-UniRule"/>
</dbReference>
<dbReference type="GO" id="GO:0001682">
    <property type="term" value="P:tRNA 5'-leader removal"/>
    <property type="evidence" value="ECO:0007669"/>
    <property type="project" value="UniProtKB-UniRule"/>
</dbReference>
<dbReference type="FunFam" id="3.30.230.10:FF:000021">
    <property type="entry name" value="Ribonuclease P protein component"/>
    <property type="match status" value="1"/>
</dbReference>
<dbReference type="Gene3D" id="3.30.230.10">
    <property type="match status" value="1"/>
</dbReference>
<dbReference type="HAMAP" id="MF_00227">
    <property type="entry name" value="RNase_P"/>
    <property type="match status" value="1"/>
</dbReference>
<dbReference type="InterPro" id="IPR020568">
    <property type="entry name" value="Ribosomal_Su5_D2-typ_SF"/>
</dbReference>
<dbReference type="InterPro" id="IPR014721">
    <property type="entry name" value="Ribsml_uS5_D2-typ_fold_subgr"/>
</dbReference>
<dbReference type="InterPro" id="IPR000100">
    <property type="entry name" value="RNase_P"/>
</dbReference>
<dbReference type="InterPro" id="IPR020539">
    <property type="entry name" value="RNase_P_CS"/>
</dbReference>
<dbReference type="NCBIfam" id="TIGR00188">
    <property type="entry name" value="rnpA"/>
    <property type="match status" value="1"/>
</dbReference>
<dbReference type="PANTHER" id="PTHR33992">
    <property type="entry name" value="RIBONUCLEASE P PROTEIN COMPONENT"/>
    <property type="match status" value="1"/>
</dbReference>
<dbReference type="PANTHER" id="PTHR33992:SF1">
    <property type="entry name" value="RIBONUCLEASE P PROTEIN COMPONENT"/>
    <property type="match status" value="1"/>
</dbReference>
<dbReference type="Pfam" id="PF00825">
    <property type="entry name" value="Ribonuclease_P"/>
    <property type="match status" value="1"/>
</dbReference>
<dbReference type="SUPFAM" id="SSF54211">
    <property type="entry name" value="Ribosomal protein S5 domain 2-like"/>
    <property type="match status" value="1"/>
</dbReference>
<dbReference type="PROSITE" id="PS00648">
    <property type="entry name" value="RIBONUCLEASE_P"/>
    <property type="match status" value="1"/>
</dbReference>
<comment type="function">
    <text evidence="1">RNaseP catalyzes the removal of the 5'-leader sequence from pre-tRNA to produce the mature 5'-terminus. It can also cleave other RNA substrates such as 4.5S RNA. The protein component plays an auxiliary but essential role in vivo by binding to the 5'-leader sequence and broadening the substrate specificity of the ribozyme.</text>
</comment>
<comment type="catalytic activity">
    <reaction evidence="1">
        <text>Endonucleolytic cleavage of RNA, removing 5'-extranucleotides from tRNA precursor.</text>
        <dbReference type="EC" id="3.1.26.5"/>
    </reaction>
</comment>
<comment type="subunit">
    <text evidence="1">Consists of a catalytic RNA component (M1 or rnpB) and a protein subunit.</text>
</comment>
<comment type="similarity">
    <text evidence="1">Belongs to the RnpA family.</text>
</comment>
<sequence length="117" mass="13688">MAIKKTYRVKRSKDFDQIFSAKHSFANKRFVVYKLNTNQPHFRVGLSVSKKLGHAVLRNRIKRLLRHAVAEFKPYLVDEDFVIIARSGVETLSFEEVKKNLRHVLKLSKIYVDGEND</sequence>
<name>RNPA_LACLM</name>
<accession>A2RHL3</accession>
<gene>
    <name evidence="1" type="primary">rnpA</name>
    <name type="ordered locus">llmg_0142</name>
</gene>
<proteinExistence type="inferred from homology"/>
<keyword id="KW-0255">Endonuclease</keyword>
<keyword id="KW-0378">Hydrolase</keyword>
<keyword id="KW-0540">Nuclease</keyword>
<keyword id="KW-0694">RNA-binding</keyword>
<keyword id="KW-0819">tRNA processing</keyword>